<sequence length="679" mass="77578">MDSSSSSNYFSVGSTNPSAVVLLYSKELKKWDEFEDILEERRHVSDLKFAMKCYTPLVYKGITPCKPSDIKNSVLNSEEIHYVIKQLSMESLQSVDVLREEVCEILDEMSHKLRLGAIRFFAFALSKIFKQIFSKVCVNEEGIQKLQRAIQEHPVVLLPSHRSYIDFLMLSFLLYNYDLPVPVIAAGMDFLGMKMIGELLRMSGAFFMRRTFGGNKLYWAVFSEYVKTMLRNGYAPVEFFLEGTRSRSAKTLTPKFGLLSIVMEPFFKREVFDTYLVPISISYDKILEETLYAYELLGVPKPKESTTGLLKARRILSENFGSIYVYFGDPVSLRSLASGRMSRSPYNLVPRYIPQKQSEDMHAFVTEVAYKMQLLQIENLVLSPWPLIVAVLLQNRPSMDFDALLEKTLWLKGLTQAFGGFLIWPDNEPAEEVVQHHILLHSNIASLVKDQVILKLESGDSEVVDGLIFQHITLLTCSTYRNQLLNIFVRPSLVAVALQMTPGFRKEDVYSAFRFLRDVFSDEFIFFPGNTVKDFEEGCYLLCKSETIQMTTRDILVTEKGNAVLEFLIGLFRPFVECYKLLCIYLLKEEEEHFTEKQYLAAVRKFTSQLLNQGASQCYDVLSSDVQKNALAAFVRLGVVEKKKVNNDYIFSVNEPATTKLEEMLGCKIPIGKPATAKL</sequence>
<feature type="chain" id="PRO_0000459435" description="Dihydroxyacetone phosphate acyltransferase">
    <location>
        <begin position="1"/>
        <end position="679"/>
    </location>
</feature>
<feature type="short sequence motif" description="HXXXXD motif" evidence="2">
    <location>
        <begin position="161"/>
        <end position="166"/>
    </location>
</feature>
<feature type="modified residue" description="Phosphoserine" evidence="3">
    <location>
        <position position="11"/>
    </location>
</feature>
<feature type="modified residue" description="N6-acetyllysine" evidence="1">
    <location>
        <position position="642"/>
    </location>
</feature>
<organism>
    <name type="scientific">Oryctolagus cuniculus</name>
    <name type="common">Rabbit</name>
    <dbReference type="NCBI Taxonomy" id="9986"/>
    <lineage>
        <taxon>Eukaryota</taxon>
        <taxon>Metazoa</taxon>
        <taxon>Chordata</taxon>
        <taxon>Craniata</taxon>
        <taxon>Vertebrata</taxon>
        <taxon>Euteleostomi</taxon>
        <taxon>Mammalia</taxon>
        <taxon>Eutheria</taxon>
        <taxon>Euarchontoglires</taxon>
        <taxon>Glires</taxon>
        <taxon>Lagomorpha</taxon>
        <taxon>Leporidae</taxon>
        <taxon>Oryctolagus</taxon>
    </lineage>
</organism>
<dbReference type="EC" id="2.3.1.42" evidence="5"/>
<dbReference type="EMBL" id="AAGW02026204">
    <property type="status" value="NOT_ANNOTATED_CDS"/>
    <property type="molecule type" value="Genomic_DNA"/>
</dbReference>
<dbReference type="EMBL" id="AAGW02026205">
    <property type="status" value="NOT_ANNOTATED_CDS"/>
    <property type="molecule type" value="Genomic_DNA"/>
</dbReference>
<dbReference type="RefSeq" id="XP_002717420.1">
    <property type="nucleotide sequence ID" value="XM_002717374.3"/>
</dbReference>
<dbReference type="SMR" id="G1SPE9"/>
<dbReference type="FunCoup" id="G1SPE9">
    <property type="interactions" value="1377"/>
</dbReference>
<dbReference type="STRING" id="9986.ENSOCUP00000004915"/>
<dbReference type="PaxDb" id="9986-ENSOCUP00000004915"/>
<dbReference type="Ensembl" id="ENSOCUT00000005666.3">
    <property type="protein sequence ID" value="ENSOCUP00000004915.3"/>
    <property type="gene ID" value="ENSOCUG00000005664.4"/>
</dbReference>
<dbReference type="GeneID" id="100353451"/>
<dbReference type="KEGG" id="ocu:100353451"/>
<dbReference type="CTD" id="8443"/>
<dbReference type="eggNOG" id="KOG3730">
    <property type="taxonomic scope" value="Eukaryota"/>
</dbReference>
<dbReference type="GeneTree" id="ENSGT00520000055570"/>
<dbReference type="HOGENOM" id="CLU_017332_0_1_1"/>
<dbReference type="InParanoid" id="G1SPE9"/>
<dbReference type="OMA" id="RFNLEWY"/>
<dbReference type="OrthoDB" id="10255570at2759"/>
<dbReference type="TreeFam" id="TF313360"/>
<dbReference type="UniPathway" id="UPA00940"/>
<dbReference type="Proteomes" id="UP000001811">
    <property type="component" value="Chromosome 16"/>
</dbReference>
<dbReference type="Bgee" id="ENSOCUG00000005664">
    <property type="expression patterns" value="Expressed in blood and 15 other cell types or tissues"/>
</dbReference>
<dbReference type="GO" id="GO:0030054">
    <property type="term" value="C:cell junction"/>
    <property type="evidence" value="ECO:0007669"/>
    <property type="project" value="Ensembl"/>
</dbReference>
<dbReference type="GO" id="GO:0031966">
    <property type="term" value="C:mitochondrial membrane"/>
    <property type="evidence" value="ECO:0007669"/>
    <property type="project" value="TreeGrafter"/>
</dbReference>
<dbReference type="GO" id="GO:0005778">
    <property type="term" value="C:peroxisomal membrane"/>
    <property type="evidence" value="ECO:0007669"/>
    <property type="project" value="UniProtKB-SubCell"/>
</dbReference>
<dbReference type="GO" id="GO:0005777">
    <property type="term" value="C:peroxisome"/>
    <property type="evidence" value="ECO:0000314"/>
    <property type="project" value="UniProtKB"/>
</dbReference>
<dbReference type="GO" id="GO:0004366">
    <property type="term" value="F:glycerol-3-phosphate O-acyltransferase activity"/>
    <property type="evidence" value="ECO:0007669"/>
    <property type="project" value="TreeGrafter"/>
</dbReference>
<dbReference type="GO" id="GO:0016287">
    <property type="term" value="F:glycerone-phosphate O-acyltransferase activity"/>
    <property type="evidence" value="ECO:0000314"/>
    <property type="project" value="UniProtKB"/>
</dbReference>
<dbReference type="GO" id="GO:0021587">
    <property type="term" value="P:cerebellum morphogenesis"/>
    <property type="evidence" value="ECO:0007669"/>
    <property type="project" value="Ensembl"/>
</dbReference>
<dbReference type="GO" id="GO:0008611">
    <property type="term" value="P:ether lipid biosynthetic process"/>
    <property type="evidence" value="ECO:0000314"/>
    <property type="project" value="UniProtKB"/>
</dbReference>
<dbReference type="GO" id="GO:0006631">
    <property type="term" value="P:fatty acid metabolic process"/>
    <property type="evidence" value="ECO:0007669"/>
    <property type="project" value="TreeGrafter"/>
</dbReference>
<dbReference type="GO" id="GO:0006650">
    <property type="term" value="P:glycerophospholipid metabolic process"/>
    <property type="evidence" value="ECO:0007669"/>
    <property type="project" value="UniProtKB-UniPathway"/>
</dbReference>
<dbReference type="GO" id="GO:0061024">
    <property type="term" value="P:membrane organization"/>
    <property type="evidence" value="ECO:0007669"/>
    <property type="project" value="Ensembl"/>
</dbReference>
<dbReference type="GO" id="GO:0030913">
    <property type="term" value="P:paranodal junction assembly"/>
    <property type="evidence" value="ECO:0007669"/>
    <property type="project" value="Ensembl"/>
</dbReference>
<dbReference type="GO" id="GO:0008654">
    <property type="term" value="P:phospholipid biosynthetic process"/>
    <property type="evidence" value="ECO:0007669"/>
    <property type="project" value="TreeGrafter"/>
</dbReference>
<dbReference type="GO" id="GO:0007416">
    <property type="term" value="P:synapse assembly"/>
    <property type="evidence" value="ECO:0007669"/>
    <property type="project" value="Ensembl"/>
</dbReference>
<dbReference type="GO" id="GO:0019432">
    <property type="term" value="P:triglyceride biosynthetic process"/>
    <property type="evidence" value="ECO:0007669"/>
    <property type="project" value="TreeGrafter"/>
</dbReference>
<dbReference type="CDD" id="cd07993">
    <property type="entry name" value="LPLAT_DHAPAT-like"/>
    <property type="match status" value="1"/>
</dbReference>
<dbReference type="InterPro" id="IPR028353">
    <property type="entry name" value="DHAPAT"/>
</dbReference>
<dbReference type="InterPro" id="IPR022284">
    <property type="entry name" value="GPAT/DHAPAT"/>
</dbReference>
<dbReference type="InterPro" id="IPR045520">
    <property type="entry name" value="GPAT/DHAPAT_C"/>
</dbReference>
<dbReference type="InterPro" id="IPR041728">
    <property type="entry name" value="GPAT/DHAPAT_LPLAT"/>
</dbReference>
<dbReference type="InterPro" id="IPR002123">
    <property type="entry name" value="Plipid/glycerol_acylTrfase"/>
</dbReference>
<dbReference type="PANTHER" id="PTHR12563:SF17">
    <property type="entry name" value="DIHYDROXYACETONE PHOSPHATE ACYLTRANSFERASE"/>
    <property type="match status" value="1"/>
</dbReference>
<dbReference type="PANTHER" id="PTHR12563">
    <property type="entry name" value="GLYCEROL-3-PHOSPHATE ACYLTRANSFERASE"/>
    <property type="match status" value="1"/>
</dbReference>
<dbReference type="Pfam" id="PF01553">
    <property type="entry name" value="Acyltransferase"/>
    <property type="match status" value="1"/>
</dbReference>
<dbReference type="Pfam" id="PF19277">
    <property type="entry name" value="GPAT_C"/>
    <property type="match status" value="1"/>
</dbReference>
<dbReference type="PIRSF" id="PIRSF500063">
    <property type="entry name" value="DHAPAT"/>
    <property type="match status" value="1"/>
</dbReference>
<dbReference type="PIRSF" id="PIRSF000437">
    <property type="entry name" value="GPAT_DHAPAT"/>
    <property type="match status" value="1"/>
</dbReference>
<dbReference type="SMART" id="SM00563">
    <property type="entry name" value="PlsC"/>
    <property type="match status" value="1"/>
</dbReference>
<dbReference type="SUPFAM" id="SSF69593">
    <property type="entry name" value="Glycerol-3-phosphate (1)-acyltransferase"/>
    <property type="match status" value="1"/>
</dbReference>
<accession>G1SPE9</accession>
<name>GNPAT_RABIT</name>
<comment type="function">
    <text evidence="5">Dihydroxyacetonephosphate acyltransferase catalyzing the first step in the biosynthesis of plasmalogens, a subset of phospholipids that differ from other glycerolipids by having an alkyl chain attached through a vinyl ether linkage at the sn-1 position of the glycerol backbone, and which unique physical properties have an impact on various aspects of cell signaling and membrane biology.</text>
</comment>
<comment type="catalytic activity">
    <reaction evidence="5">
        <text>dihydroxyacetone phosphate + an acyl-CoA = a 1-acylglycerone 3-phosphate + CoA</text>
        <dbReference type="Rhea" id="RHEA:17657"/>
        <dbReference type="ChEBI" id="CHEBI:57287"/>
        <dbReference type="ChEBI" id="CHEBI:57534"/>
        <dbReference type="ChEBI" id="CHEBI:57642"/>
        <dbReference type="ChEBI" id="CHEBI:58342"/>
        <dbReference type="EC" id="2.3.1.42"/>
    </reaction>
    <physiologicalReaction direction="left-to-right" evidence="8">
        <dbReference type="Rhea" id="RHEA:17658"/>
    </physiologicalReaction>
</comment>
<comment type="catalytic activity">
    <reaction evidence="5">
        <text>dihydroxyacetone phosphate + hexadecanoyl-CoA = 1-hexadecanoylglycerone 3-phosphate + CoA</text>
        <dbReference type="Rhea" id="RHEA:40715"/>
        <dbReference type="ChEBI" id="CHEBI:57287"/>
        <dbReference type="ChEBI" id="CHEBI:57379"/>
        <dbReference type="ChEBI" id="CHEBI:57642"/>
        <dbReference type="ChEBI" id="CHEBI:58303"/>
    </reaction>
    <physiologicalReaction direction="left-to-right" evidence="8">
        <dbReference type="Rhea" id="RHEA:40716"/>
    </physiologicalReaction>
</comment>
<comment type="pathway">
    <text evidence="5">Membrane lipid metabolism; glycerophospholipid metabolism.</text>
</comment>
<comment type="subunit">
    <text evidence="5">Part of a heterotrimeric complex composed of GNPAT, AGPS and a modified form of GNPAT.</text>
</comment>
<comment type="subcellular location">
    <subcellularLocation>
        <location evidence="4">Peroxisome membrane</location>
        <topology evidence="4">Peripheral membrane protein</topology>
        <orientation evidence="4">Matrix side</orientation>
    </subcellularLocation>
    <text evidence="4">Exclusively localized to the lumenal side of the peroxisomal membrane.</text>
</comment>
<comment type="domain">
    <text evidence="2">The HXXXXD motif is essential for acyltransferase activity and may constitute the binding site for the phosphate moiety of the glycerol-3-phosphate.</text>
</comment>
<comment type="similarity">
    <text evidence="7">Belongs to the GPAT/DAPAT family.</text>
</comment>
<proteinExistence type="evidence at protein level"/>
<evidence type="ECO:0000250" key="1">
    <source>
        <dbReference type="UniProtKB" id="O15228"/>
    </source>
</evidence>
<evidence type="ECO:0000250" key="2">
    <source>
        <dbReference type="UniProtKB" id="P10349"/>
    </source>
</evidence>
<evidence type="ECO:0000250" key="3">
    <source>
        <dbReference type="UniProtKB" id="P98192"/>
    </source>
</evidence>
<evidence type="ECO:0000250" key="4">
    <source>
        <dbReference type="UniProtKB" id="Q9ES71"/>
    </source>
</evidence>
<evidence type="ECO:0000269" key="5">
    <source>
    </source>
</evidence>
<evidence type="ECO:0000303" key="6">
    <source>
    </source>
</evidence>
<evidence type="ECO:0000305" key="7"/>
<evidence type="ECO:0000305" key="8">
    <source>
    </source>
</evidence>
<gene>
    <name evidence="1" type="primary">GNPAT</name>
</gene>
<keyword id="KW-0007">Acetylation</keyword>
<keyword id="KW-0012">Acyltransferase</keyword>
<keyword id="KW-0472">Membrane</keyword>
<keyword id="KW-0576">Peroxisome</keyword>
<keyword id="KW-0597">Phosphoprotein</keyword>
<keyword id="KW-1185">Reference proteome</keyword>
<keyword id="KW-0808">Transferase</keyword>
<protein>
    <recommendedName>
        <fullName evidence="8">Dihydroxyacetone phosphate acyltransferase</fullName>
        <shortName evidence="6">DAP-AT</shortName>
        <ecNumber evidence="5">2.3.1.42</ecNumber>
    </recommendedName>
    <alternativeName>
        <fullName evidence="1">Glycerone-phosphate O-acyltransferase</fullName>
    </alternativeName>
</protein>
<reference key="1">
    <citation type="journal article" date="2011" name="Nature">
        <title>A high-resolution map of human evolutionary constraint using 29 mammals.</title>
        <authorList>
            <person name="Lindblad-Toh K."/>
            <person name="Garber M."/>
            <person name="Zuk O."/>
            <person name="Lin M.F."/>
            <person name="Parker B.J."/>
            <person name="Washietl S."/>
            <person name="Kheradpour P."/>
            <person name="Ernst J."/>
            <person name="Jordan G."/>
            <person name="Mauceli E."/>
            <person name="Ward L.D."/>
            <person name="Lowe C.B."/>
            <person name="Holloway A.K."/>
            <person name="Clamp M."/>
            <person name="Gnerre S."/>
            <person name="Alfoldi J."/>
            <person name="Beal K."/>
            <person name="Chang J."/>
            <person name="Clawson H."/>
            <person name="Cuff J."/>
            <person name="Di Palma F."/>
            <person name="Fitzgerald S."/>
            <person name="Flicek P."/>
            <person name="Guttman M."/>
            <person name="Hubisz M.J."/>
            <person name="Jaffe D.B."/>
            <person name="Jungreis I."/>
            <person name="Kent W.J."/>
            <person name="Kostka D."/>
            <person name="Lara M."/>
            <person name="Martins A.L."/>
            <person name="Massingham T."/>
            <person name="Moltke I."/>
            <person name="Raney B.J."/>
            <person name="Rasmussen M.D."/>
            <person name="Robinson J."/>
            <person name="Stark A."/>
            <person name="Vilella A.J."/>
            <person name="Wen J."/>
            <person name="Xie X."/>
            <person name="Zody M.C."/>
            <person name="Baldwin J."/>
            <person name="Bloom T."/>
            <person name="Chin C.W."/>
            <person name="Heiman D."/>
            <person name="Nicol R."/>
            <person name="Nusbaum C."/>
            <person name="Young S."/>
            <person name="Wilkinson J."/>
            <person name="Worley K.C."/>
            <person name="Kovar C.L."/>
            <person name="Muzny D.M."/>
            <person name="Gibbs R.A."/>
            <person name="Cree A."/>
            <person name="Dihn H.H."/>
            <person name="Fowler G."/>
            <person name="Jhangiani S."/>
            <person name="Joshi V."/>
            <person name="Lee S."/>
            <person name="Lewis L.R."/>
            <person name="Nazareth L.V."/>
            <person name="Okwuonu G."/>
            <person name="Santibanez J."/>
            <person name="Warren W.C."/>
            <person name="Mardis E.R."/>
            <person name="Weinstock G.M."/>
            <person name="Wilson R.K."/>
            <person name="Delehaunty K."/>
            <person name="Dooling D."/>
            <person name="Fronik C."/>
            <person name="Fulton L."/>
            <person name="Fulton B."/>
            <person name="Graves T."/>
            <person name="Minx P."/>
            <person name="Sodergren E."/>
            <person name="Birney E."/>
            <person name="Margulies E.H."/>
            <person name="Herrero J."/>
            <person name="Green E.D."/>
            <person name="Haussler D."/>
            <person name="Siepel A."/>
            <person name="Goldman N."/>
            <person name="Pollard K.S."/>
            <person name="Pedersen J.S."/>
            <person name="Lander E.S."/>
            <person name="Kellis M."/>
        </authorList>
    </citation>
    <scope>NUCLEOTIDE SEQUENCE [LARGE SCALE GENOMIC DNA]</scope>
    <source>
        <strain>Thorbecke</strain>
    </source>
</reference>
<reference key="2">
    <citation type="journal article" date="1997" name="FEBS Lett.">
        <title>Ether lipid biosynthesis: isolation and molecular characterization of human dihydroxyacetonephosphate acyltransferase.</title>
        <authorList>
            <person name="Thai T.-P."/>
            <person name="Heid H."/>
            <person name="Rackwitz H.-R."/>
            <person name="Hunziker A."/>
            <person name="Gorgas K."/>
            <person name="Just W.W."/>
        </authorList>
    </citation>
    <scope>IDENTIFICATION BY MASS SPECTROMETRY</scope>
    <scope>FUNCTION</scope>
    <scope>CATALYTIC ACTIVITY</scope>
    <scope>PATHWAY</scope>
    <scope>SUBUNIT</scope>
</reference>